<gene>
    <name type="ordered locus">Os06g0143900</name>
    <name type="ordered locus">LOC_Os06g05180</name>
    <name type="ORF">OSJNBa0007O20.8-1</name>
</gene>
<reference key="1">
    <citation type="journal article" date="2005" name="Nature">
        <title>The map-based sequence of the rice genome.</title>
        <authorList>
            <consortium name="International rice genome sequencing project (IRGSP)"/>
        </authorList>
    </citation>
    <scope>NUCLEOTIDE SEQUENCE [LARGE SCALE GENOMIC DNA]</scope>
    <source>
        <strain>cv. Nipponbare</strain>
    </source>
</reference>
<reference key="2">
    <citation type="journal article" date="2008" name="Nucleic Acids Res.">
        <title>The rice annotation project database (RAP-DB): 2008 update.</title>
        <authorList>
            <consortium name="The rice annotation project (RAP)"/>
        </authorList>
    </citation>
    <scope>GENOME REANNOTATION</scope>
    <source>
        <strain>cv. Nipponbare</strain>
    </source>
</reference>
<reference key="3">
    <citation type="journal article" date="2013" name="Rice">
        <title>Improvement of the Oryza sativa Nipponbare reference genome using next generation sequence and optical map data.</title>
        <authorList>
            <person name="Kawahara Y."/>
            <person name="de la Bastide M."/>
            <person name="Hamilton J.P."/>
            <person name="Kanamori H."/>
            <person name="McCombie W.R."/>
            <person name="Ouyang S."/>
            <person name="Schwartz D.C."/>
            <person name="Tanaka T."/>
            <person name="Wu J."/>
            <person name="Zhou S."/>
            <person name="Childs K.L."/>
            <person name="Davidson R.M."/>
            <person name="Lin H."/>
            <person name="Quesada-Ocampo L."/>
            <person name="Vaillancourt B."/>
            <person name="Sakai H."/>
            <person name="Lee S.S."/>
            <person name="Kim J."/>
            <person name="Numa H."/>
            <person name="Itoh T."/>
            <person name="Buell C.R."/>
            <person name="Matsumoto T."/>
        </authorList>
    </citation>
    <scope>GENOME REANNOTATION</scope>
    <source>
        <strain>cv. Nipponbare</strain>
    </source>
</reference>
<reference key="4">
    <citation type="journal article" date="2003" name="Science">
        <title>Collection, mapping, and annotation of over 28,000 cDNA clones from japonica rice.</title>
        <authorList>
            <consortium name="The rice full-length cDNA consortium"/>
        </authorList>
    </citation>
    <scope>NUCLEOTIDE SEQUENCE [LARGE SCALE MRNA]</scope>
    <source>
        <strain>cv. Nipponbare</strain>
    </source>
</reference>
<protein>
    <recommendedName>
        <fullName>Coatomer subunit beta'-1</fullName>
    </recommendedName>
    <alternativeName>
        <fullName>Beta'-coat protein 1</fullName>
        <shortName>Beta'-COP 1</shortName>
    </alternativeName>
</protein>
<accession>Q5VQ78</accession>
<accession>A0A0P0WSR8</accession>
<sequence length="907" mass="102890">MPLRLEIKRKFAQRSERVKSVDLHPTEPWILSSLYSGSVCIWDYQSQTMVKSFEVSELPVRSAKFISRKQWVVAGADDMFIRVYNYNTMDKVKVFEAHTDYIRCVAVHPTLPYVLSSSDDMLIKLWDWDKGWMCTQIFEGHSHYVMQVTFNPKDTNTFASASLDRTTKIWSLGSPDPNFTLDGHQKGVNCVDYFTGGDRPYLITGSDDSTAKVWDYQTKSCVQTLEGHTHNISAVCFHPELPIIITGSEDGTVRIWHSTTYRLENTLNYGLERVWAVGYMKGSRRMVIGYDEGTIMIKMGREVPVASMDTSGKIIWAKHNEIQTVNIKTVGAGFEVTDGERLPLAVKELGSCDLYPQSLKHNPNGRFVVVCGDGEFIIYTALAWRNRSFGSALEFVWSSEGEYAIRESTSRIKIFSKSFQEKKTIRPTFSAERIFGGILLAMCSSDFICFYDWADCRLIRRIDVNVKNLYWADSGDLVAIASDTSFYILKYNRDVVASYLESGKPVDEEGVEDAFELLHEVNERVRTGIWVGDCFIYNNSSWRLNYCVGGEVTTMYHLDRPMYLLGYLANQSRVYLIDKEFNVMGYTLLLSLIEYKTLVMRGDIERANDILPSIPKAQYNNVAHFLESRGMLEEALEIATDADYRFDLAVQLGKLEVAKAIAMEAQSESKWKQLGELAMSTGKLDMAEECLVQAKDLSGLLLLYSSLGDAEGIEKLASQAKEHGKNNVAFLCLFMLGKLEDCIQLLIDSNRIPEAALMARSYLPSKVSEIVAIWRNDLSKVNPKAAESLADPSEYPNLFEDWQVALTVEKNVASRRVHYPPADEYLNHAEKSDMTLVEAFKRMQVIEDEETEDALDENGEPDEEVLEENKVEESTDEAVEVDADEPEETVLVNGKEGEEQWVLTEHE</sequence>
<feature type="chain" id="PRO_0000285607" description="Coatomer subunit beta'-1">
    <location>
        <begin position="1"/>
        <end position="907"/>
    </location>
</feature>
<feature type="repeat" description="WD 1">
    <location>
        <begin position="13"/>
        <end position="52"/>
    </location>
</feature>
<feature type="repeat" description="WD 2">
    <location>
        <begin position="55"/>
        <end position="94"/>
    </location>
</feature>
<feature type="repeat" description="WD 3">
    <location>
        <begin position="97"/>
        <end position="136"/>
    </location>
</feature>
<feature type="repeat" description="WD 4">
    <location>
        <begin position="140"/>
        <end position="180"/>
    </location>
</feature>
<feature type="repeat" description="WD 5">
    <location>
        <begin position="183"/>
        <end position="224"/>
    </location>
</feature>
<feature type="repeat" description="WD 6">
    <location>
        <begin position="227"/>
        <end position="266"/>
    </location>
</feature>
<feature type="repeat" description="WD 7">
    <location>
        <begin position="269"/>
        <end position="309"/>
    </location>
</feature>
<feature type="repeat" description="WD 8">
    <location>
        <begin position="351"/>
        <end position="389"/>
    </location>
</feature>
<feature type="repeat" description="WD 9">
    <location>
        <begin position="461"/>
        <end position="501"/>
    </location>
</feature>
<feature type="region of interest" description="Disordered" evidence="2">
    <location>
        <begin position="850"/>
        <end position="887"/>
    </location>
</feature>
<feature type="compositionally biased region" description="Acidic residues" evidence="2">
    <location>
        <begin position="850"/>
        <end position="866"/>
    </location>
</feature>
<feature type="compositionally biased region" description="Acidic residues" evidence="2">
    <location>
        <begin position="874"/>
        <end position="887"/>
    </location>
</feature>
<feature type="sequence conflict" description="In Ref. 4; AK111584." evidence="3" ref="4">
    <original>W</original>
    <variation>R</variation>
    <location>
        <position position="542"/>
    </location>
</feature>
<dbReference type="EMBL" id="AP003487">
    <property type="protein sequence ID" value="BAD68397.1"/>
    <property type="molecule type" value="Genomic_DNA"/>
</dbReference>
<dbReference type="EMBL" id="AP008212">
    <property type="protein sequence ID" value="BAF18693.1"/>
    <property type="molecule type" value="Genomic_DNA"/>
</dbReference>
<dbReference type="EMBL" id="AP014962">
    <property type="protein sequence ID" value="BAS96117.1"/>
    <property type="molecule type" value="Genomic_DNA"/>
</dbReference>
<dbReference type="EMBL" id="AK111584">
    <property type="status" value="NOT_ANNOTATED_CDS"/>
    <property type="molecule type" value="mRNA"/>
</dbReference>
<dbReference type="RefSeq" id="XP_015643763.1">
    <property type="nucleotide sequence ID" value="XM_015788277.1"/>
</dbReference>
<dbReference type="SMR" id="Q5VQ78"/>
<dbReference type="FunCoup" id="Q5VQ78">
    <property type="interactions" value="2686"/>
</dbReference>
<dbReference type="STRING" id="39947.Q5VQ78"/>
<dbReference type="PaxDb" id="39947-Q5VQ78"/>
<dbReference type="EnsemblPlants" id="Os06t0143900-01">
    <property type="protein sequence ID" value="Os06t0143900-01"/>
    <property type="gene ID" value="Os06g0143900"/>
</dbReference>
<dbReference type="Gramene" id="Os06t0143900-01">
    <property type="protein sequence ID" value="Os06t0143900-01"/>
    <property type="gene ID" value="Os06g0143900"/>
</dbReference>
<dbReference type="KEGG" id="dosa:Os06g0143900"/>
<dbReference type="eggNOG" id="KOG0276">
    <property type="taxonomic scope" value="Eukaryota"/>
</dbReference>
<dbReference type="HOGENOM" id="CLU_005507_0_0_1"/>
<dbReference type="InParanoid" id="Q5VQ78"/>
<dbReference type="OMA" id="KSYGQCV"/>
<dbReference type="OrthoDB" id="10261470at2759"/>
<dbReference type="Proteomes" id="UP000000763">
    <property type="component" value="Chromosome 6"/>
</dbReference>
<dbReference type="Proteomes" id="UP000059680">
    <property type="component" value="Chromosome 6"/>
</dbReference>
<dbReference type="ExpressionAtlas" id="Q5VQ78">
    <property type="expression patterns" value="baseline and differential"/>
</dbReference>
<dbReference type="GO" id="GO:0030126">
    <property type="term" value="C:COPI vesicle coat"/>
    <property type="evidence" value="ECO:0000318"/>
    <property type="project" value="GO_Central"/>
</dbReference>
<dbReference type="GO" id="GO:0000139">
    <property type="term" value="C:Golgi membrane"/>
    <property type="evidence" value="ECO:0007669"/>
    <property type="project" value="UniProtKB-SubCell"/>
</dbReference>
<dbReference type="GO" id="GO:0005198">
    <property type="term" value="F:structural molecule activity"/>
    <property type="evidence" value="ECO:0007669"/>
    <property type="project" value="InterPro"/>
</dbReference>
<dbReference type="GO" id="GO:0006888">
    <property type="term" value="P:endoplasmic reticulum to Golgi vesicle-mediated transport"/>
    <property type="evidence" value="ECO:0000318"/>
    <property type="project" value="GO_Central"/>
</dbReference>
<dbReference type="GO" id="GO:0006891">
    <property type="term" value="P:intra-Golgi vesicle-mediated transport"/>
    <property type="evidence" value="ECO:0000318"/>
    <property type="project" value="GO_Central"/>
</dbReference>
<dbReference type="GO" id="GO:0006886">
    <property type="term" value="P:intracellular protein transport"/>
    <property type="evidence" value="ECO:0000318"/>
    <property type="project" value="GO_Central"/>
</dbReference>
<dbReference type="GO" id="GO:0006890">
    <property type="term" value="P:retrograde vesicle-mediated transport, Golgi to endoplasmic reticulum"/>
    <property type="evidence" value="ECO:0000318"/>
    <property type="project" value="GO_Central"/>
</dbReference>
<dbReference type="CDD" id="cd22947">
    <property type="entry name" value="Coatomer_WDAD_beta-like"/>
    <property type="match status" value="1"/>
</dbReference>
<dbReference type="CDD" id="cd00200">
    <property type="entry name" value="WD40"/>
    <property type="match status" value="1"/>
</dbReference>
<dbReference type="FunFam" id="1.25.40.470:FF:000001">
    <property type="entry name" value="Coatomer subunit beta"/>
    <property type="match status" value="1"/>
</dbReference>
<dbReference type="FunFam" id="2.130.10.10:FF:000008">
    <property type="entry name" value="Coatomer subunit beta"/>
    <property type="match status" value="1"/>
</dbReference>
<dbReference type="Gene3D" id="1.25.40.470">
    <property type="match status" value="1"/>
</dbReference>
<dbReference type="Gene3D" id="2.130.10.10">
    <property type="entry name" value="YVTN repeat-like/Quinoprotein amine dehydrogenase"/>
    <property type="match status" value="1"/>
</dbReference>
<dbReference type="InterPro" id="IPR006692">
    <property type="entry name" value="Beta-prop_COPA/B_2nd"/>
</dbReference>
<dbReference type="InterPro" id="IPR050844">
    <property type="entry name" value="Coatomer_complex_subunit"/>
</dbReference>
<dbReference type="InterPro" id="IPR016453">
    <property type="entry name" value="COPB2"/>
</dbReference>
<dbReference type="InterPro" id="IPR020472">
    <property type="entry name" value="G-protein_beta_WD-40_rep"/>
</dbReference>
<dbReference type="InterPro" id="IPR056176">
    <property type="entry name" value="TPR_COPA_B"/>
</dbReference>
<dbReference type="InterPro" id="IPR015943">
    <property type="entry name" value="WD40/YVTN_repeat-like_dom_sf"/>
</dbReference>
<dbReference type="InterPro" id="IPR036322">
    <property type="entry name" value="WD40_repeat_dom_sf"/>
</dbReference>
<dbReference type="InterPro" id="IPR001680">
    <property type="entry name" value="WD40_rpt"/>
</dbReference>
<dbReference type="PANTHER" id="PTHR19876">
    <property type="entry name" value="COATOMER"/>
    <property type="match status" value="1"/>
</dbReference>
<dbReference type="PANTHER" id="PTHR19876:SF77">
    <property type="entry name" value="COATOMER SUBUNIT BETA'-1"/>
    <property type="match status" value="1"/>
</dbReference>
<dbReference type="Pfam" id="PF04053">
    <property type="entry name" value="B-prop_COPA_B_2nd"/>
    <property type="match status" value="1"/>
</dbReference>
<dbReference type="Pfam" id="PF23953">
    <property type="entry name" value="TPR_COPA_B"/>
    <property type="match status" value="1"/>
</dbReference>
<dbReference type="Pfam" id="PF00400">
    <property type="entry name" value="WD40"/>
    <property type="match status" value="5"/>
</dbReference>
<dbReference type="PIRSF" id="PIRSF005567">
    <property type="entry name" value="Coatomer_beta'_subunit"/>
    <property type="match status" value="1"/>
</dbReference>
<dbReference type="PRINTS" id="PR00320">
    <property type="entry name" value="GPROTEINBRPT"/>
</dbReference>
<dbReference type="SMART" id="SM00320">
    <property type="entry name" value="WD40"/>
    <property type="match status" value="7"/>
</dbReference>
<dbReference type="SUPFAM" id="SSF101898">
    <property type="entry name" value="NHL repeat"/>
    <property type="match status" value="1"/>
</dbReference>
<dbReference type="SUPFAM" id="SSF50978">
    <property type="entry name" value="WD40 repeat-like"/>
    <property type="match status" value="1"/>
</dbReference>
<dbReference type="PROSITE" id="PS50082">
    <property type="entry name" value="WD_REPEATS_2"/>
    <property type="match status" value="5"/>
</dbReference>
<dbReference type="PROSITE" id="PS50294">
    <property type="entry name" value="WD_REPEATS_REGION"/>
    <property type="match status" value="1"/>
</dbReference>
<name>COB21_ORYSJ</name>
<comment type="function">
    <text evidence="1">The coatomer is a cytosolic protein complex that binds to dilysine motifs and reversibly associates with Golgi non-clathrin-coated vesicles, which further mediate biosynthetic protein transport from the ER, via the Golgi up to the trans Golgi network. Coatomer complex is required for budding from Golgi membranes, and is essential for the retrograde Golgi-to-ER transport of dilysine-tagged proteins (By similarity).</text>
</comment>
<comment type="subunit">
    <text evidence="1">Oligomeric complex that consists of at least the alpha, beta, beta', gamma, delta, epsilon and zeta subunits.</text>
</comment>
<comment type="subcellular location">
    <subcellularLocation>
        <location evidence="1">Cytoplasm</location>
    </subcellularLocation>
    <subcellularLocation>
        <location evidence="1">Golgi apparatus membrane</location>
        <topology evidence="1">Peripheral membrane protein</topology>
        <orientation evidence="1">Cytoplasmic side</orientation>
    </subcellularLocation>
    <subcellularLocation>
        <location evidence="1">Cytoplasmic vesicle</location>
        <location evidence="1">COPI-coated vesicle membrane</location>
        <topology evidence="1">Peripheral membrane protein</topology>
        <orientation evidence="1">Cytoplasmic side</orientation>
    </subcellularLocation>
    <text evidence="1">The coatomer is cytoplasmic or polymerized on the cytoplasmic side of the Golgi, as well as on the vesicles/buds originating from it.</text>
</comment>
<comment type="similarity">
    <text evidence="3">Belongs to the WD repeat COPB2 family.</text>
</comment>
<proteinExistence type="evidence at transcript level"/>
<keyword id="KW-0963">Cytoplasm</keyword>
<keyword id="KW-0968">Cytoplasmic vesicle</keyword>
<keyword id="KW-0931">ER-Golgi transport</keyword>
<keyword id="KW-0333">Golgi apparatus</keyword>
<keyword id="KW-0472">Membrane</keyword>
<keyword id="KW-0653">Protein transport</keyword>
<keyword id="KW-1185">Reference proteome</keyword>
<keyword id="KW-0677">Repeat</keyword>
<keyword id="KW-0813">Transport</keyword>
<keyword id="KW-0853">WD repeat</keyword>
<evidence type="ECO:0000250" key="1"/>
<evidence type="ECO:0000256" key="2">
    <source>
        <dbReference type="SAM" id="MobiDB-lite"/>
    </source>
</evidence>
<evidence type="ECO:0000305" key="3"/>
<organism>
    <name type="scientific">Oryza sativa subsp. japonica</name>
    <name type="common">Rice</name>
    <dbReference type="NCBI Taxonomy" id="39947"/>
    <lineage>
        <taxon>Eukaryota</taxon>
        <taxon>Viridiplantae</taxon>
        <taxon>Streptophyta</taxon>
        <taxon>Embryophyta</taxon>
        <taxon>Tracheophyta</taxon>
        <taxon>Spermatophyta</taxon>
        <taxon>Magnoliopsida</taxon>
        <taxon>Liliopsida</taxon>
        <taxon>Poales</taxon>
        <taxon>Poaceae</taxon>
        <taxon>BOP clade</taxon>
        <taxon>Oryzoideae</taxon>
        <taxon>Oryzeae</taxon>
        <taxon>Oryzinae</taxon>
        <taxon>Oryza</taxon>
        <taxon>Oryza sativa</taxon>
    </lineage>
</organism>